<reference key="1">
    <citation type="journal article" date="1992" name="J. Biol. Chem.">
        <title>The biosynthesis of lipoic acid. Cloning of lip, a lipoate biosynthetic locus of Escherichia coli.</title>
        <authorList>
            <person name="Hayden M.A."/>
            <person name="Huang I."/>
            <person name="Bussiere D.E."/>
            <person name="Ashley G.W."/>
        </authorList>
    </citation>
    <scope>NUCLEOTIDE SEQUENCE [GENOMIC DNA]</scope>
    <source>
        <strain>K12</strain>
    </source>
</reference>
<reference key="2">
    <citation type="journal article" date="1996" name="DNA Res.">
        <title>A 718-kb DNA sequence of the Escherichia coli K-12 genome corresponding to the 12.7-28.0 min region on the linkage map.</title>
        <authorList>
            <person name="Oshima T."/>
            <person name="Aiba H."/>
            <person name="Baba T."/>
            <person name="Fujita K."/>
            <person name="Hayashi K."/>
            <person name="Honjo A."/>
            <person name="Ikemoto K."/>
            <person name="Inada T."/>
            <person name="Itoh T."/>
            <person name="Kajihara M."/>
            <person name="Kanai K."/>
            <person name="Kashimoto K."/>
            <person name="Kimura S."/>
            <person name="Kitagawa M."/>
            <person name="Makino K."/>
            <person name="Masuda S."/>
            <person name="Miki T."/>
            <person name="Mizobuchi K."/>
            <person name="Mori H."/>
            <person name="Motomura K."/>
            <person name="Nakamura Y."/>
            <person name="Nashimoto H."/>
            <person name="Nishio Y."/>
            <person name="Saito N."/>
            <person name="Sampei G."/>
            <person name="Seki Y."/>
            <person name="Tagami H."/>
            <person name="Takemoto K."/>
            <person name="Wada C."/>
            <person name="Yamamoto Y."/>
            <person name="Yano M."/>
            <person name="Horiuchi T."/>
        </authorList>
    </citation>
    <scope>NUCLEOTIDE SEQUENCE [LARGE SCALE GENOMIC DNA]</scope>
    <source>
        <strain>K12 / W3110 / ATCC 27325 / DSM 5911</strain>
    </source>
</reference>
<reference key="3">
    <citation type="submission" date="1997-01" db="EMBL/GenBank/DDBJ databases">
        <title>Sequence of minutes 4-25 of Escherichia coli.</title>
        <authorList>
            <person name="Chung E."/>
            <person name="Allen E."/>
            <person name="Araujo R."/>
            <person name="Aparicio A.M."/>
            <person name="Davis K."/>
            <person name="Duncan M."/>
            <person name="Federspiel N."/>
            <person name="Hyman R."/>
            <person name="Kalman S."/>
            <person name="Komp C."/>
            <person name="Kurdi O."/>
            <person name="Lew H."/>
            <person name="Lin D."/>
            <person name="Namath A."/>
            <person name="Oefner P."/>
            <person name="Roberts D."/>
            <person name="Schramm S."/>
            <person name="Davis R.W."/>
        </authorList>
    </citation>
    <scope>NUCLEOTIDE SEQUENCE [LARGE SCALE GENOMIC DNA]</scope>
    <source>
        <strain>K12 / MG1655 / ATCC 47076</strain>
    </source>
</reference>
<reference key="4">
    <citation type="journal article" date="1997" name="Science">
        <title>The complete genome sequence of Escherichia coli K-12.</title>
        <authorList>
            <person name="Blattner F.R."/>
            <person name="Plunkett G. III"/>
            <person name="Bloch C.A."/>
            <person name="Perna N.T."/>
            <person name="Burland V."/>
            <person name="Riley M."/>
            <person name="Collado-Vides J."/>
            <person name="Glasner J.D."/>
            <person name="Rode C.K."/>
            <person name="Mayhew G.F."/>
            <person name="Gregor J."/>
            <person name="Davis N.W."/>
            <person name="Kirkpatrick H.A."/>
            <person name="Goeden M.A."/>
            <person name="Rose D.J."/>
            <person name="Mau B."/>
            <person name="Shao Y."/>
        </authorList>
    </citation>
    <scope>NUCLEOTIDE SEQUENCE [LARGE SCALE GENOMIC DNA]</scope>
    <source>
        <strain>K12 / MG1655 / ATCC 47076</strain>
    </source>
</reference>
<reference key="5">
    <citation type="journal article" date="2006" name="Mol. Syst. Biol.">
        <title>Highly accurate genome sequences of Escherichia coli K-12 strains MG1655 and W3110.</title>
        <authorList>
            <person name="Hayashi K."/>
            <person name="Morooka N."/>
            <person name="Yamamoto Y."/>
            <person name="Fujita K."/>
            <person name="Isono K."/>
            <person name="Choi S."/>
            <person name="Ohtsubo E."/>
            <person name="Baba T."/>
            <person name="Wanner B.L."/>
            <person name="Mori H."/>
            <person name="Horiuchi T."/>
        </authorList>
    </citation>
    <scope>NUCLEOTIDE SEQUENCE [LARGE SCALE GENOMIC DNA]</scope>
    <source>
        <strain>K12 / W3110 / ATCC 27325 / DSM 5911</strain>
    </source>
</reference>
<reference key="6">
    <citation type="journal article" date="1998" name="EMBO J.">
        <title>Overlapping functions of components of a bacterial Sec-independent protein export pathway.</title>
        <authorList>
            <person name="Sargent F."/>
            <person name="Bogsch E.G."/>
            <person name="Stanley N.R."/>
            <person name="Wexler M."/>
            <person name="Robinson C."/>
            <person name="Berks B.C."/>
            <person name="Palmer T."/>
        </authorList>
    </citation>
    <scope>FUNCTION</scope>
    <scope>DISRUPTION PHENOTYPE</scope>
    <source>
        <strain>K12 / MC4100 / ATCC 35695 / DSM 6574</strain>
    </source>
</reference>
<reference key="7">
    <citation type="journal article" date="2000" name="Mol. Microbiol.">
        <title>The Tat protein export pathway.</title>
        <authorList>
            <person name="Berks B.C."/>
            <person name="Sargent F."/>
            <person name="Palmer T."/>
        </authorList>
    </citation>
    <scope>REVIEW</scope>
</reference>
<reference key="8">
    <citation type="journal article" date="2001" name="J. Bacteriol.">
        <title>Constitutive expression of Escherichia coli tat genes indicates an important role for the twin-arginine translocase during aerobic and anaerobic growth.</title>
        <authorList>
            <person name="Jack R.L."/>
            <person name="Sargent F."/>
            <person name="Berks B.C."/>
            <person name="Sawers G."/>
            <person name="Palmer T."/>
        </authorList>
    </citation>
    <scope>INDUCTION</scope>
</reference>
<organism>
    <name type="scientific">Escherichia coli (strain K12)</name>
    <dbReference type="NCBI Taxonomy" id="83333"/>
    <lineage>
        <taxon>Bacteria</taxon>
        <taxon>Pseudomonadati</taxon>
        <taxon>Pseudomonadota</taxon>
        <taxon>Gammaproteobacteria</taxon>
        <taxon>Enterobacterales</taxon>
        <taxon>Enterobacteriaceae</taxon>
        <taxon>Escherichia</taxon>
    </lineage>
</organism>
<gene>
    <name evidence="1" type="primary">tatE</name>
    <name type="synonym">ybeC</name>
    <name type="ordered locus">b0627</name>
    <name type="ordered locus">JW0622</name>
</gene>
<feature type="chain" id="PRO_0000097973" description="Sec-independent protein translocase protein TatE">
    <location>
        <begin position="1"/>
        <end position="67"/>
    </location>
</feature>
<feature type="transmembrane region" description="Helical" evidence="1">
    <location>
        <begin position="4"/>
        <end position="21"/>
    </location>
</feature>
<feature type="sequence conflict" description="In Ref. 1; AAA24073." evidence="4" ref="1">
    <original>N</original>
    <variation>I</variation>
    <location>
        <position position="44"/>
    </location>
</feature>
<accession>P0A843</accession>
<accession>P25895</accession>
<accession>P77420</accession>
<dbReference type="EMBL" id="M82805">
    <property type="protein sequence ID" value="AAA24073.1"/>
    <property type="molecule type" value="Genomic_DNA"/>
</dbReference>
<dbReference type="EMBL" id="U82598">
    <property type="protein sequence ID" value="AAB40827.1"/>
    <property type="molecule type" value="Genomic_DNA"/>
</dbReference>
<dbReference type="EMBL" id="U00096">
    <property type="protein sequence ID" value="AAC73728.1"/>
    <property type="molecule type" value="Genomic_DNA"/>
</dbReference>
<dbReference type="EMBL" id="AP009048">
    <property type="protein sequence ID" value="BAA35270.1"/>
    <property type="molecule type" value="Genomic_DNA"/>
</dbReference>
<dbReference type="PIR" id="JN0256">
    <property type="entry name" value="JN0256"/>
</dbReference>
<dbReference type="RefSeq" id="NP_415160.1">
    <property type="nucleotide sequence ID" value="NC_000913.3"/>
</dbReference>
<dbReference type="RefSeq" id="WP_000503931.1">
    <property type="nucleotide sequence ID" value="NZ_STEB01000031.1"/>
</dbReference>
<dbReference type="SMR" id="P0A843"/>
<dbReference type="BioGRID" id="4260637">
    <property type="interactions" value="346"/>
</dbReference>
<dbReference type="ComplexPortal" id="CPX-3445">
    <property type="entry name" value="Twin-arginine translocation complex"/>
</dbReference>
<dbReference type="FunCoup" id="P0A843">
    <property type="interactions" value="742"/>
</dbReference>
<dbReference type="IntAct" id="P0A843">
    <property type="interactions" value="56"/>
</dbReference>
<dbReference type="STRING" id="511145.b0627"/>
<dbReference type="TCDB" id="2.A.64.1.1">
    <property type="family name" value="the twin arginine targeting (tat) family"/>
</dbReference>
<dbReference type="PaxDb" id="511145-b0627"/>
<dbReference type="EnsemblBacteria" id="AAC73728">
    <property type="protein sequence ID" value="AAC73728"/>
    <property type="gene ID" value="b0627"/>
</dbReference>
<dbReference type="GeneID" id="93776856"/>
<dbReference type="GeneID" id="945228"/>
<dbReference type="KEGG" id="ecj:JW0622"/>
<dbReference type="KEGG" id="eco:b0627"/>
<dbReference type="KEGG" id="ecoc:C3026_03130"/>
<dbReference type="PATRIC" id="fig|1411691.4.peg.1641"/>
<dbReference type="EchoBASE" id="EB1282"/>
<dbReference type="eggNOG" id="COG1826">
    <property type="taxonomic scope" value="Bacteria"/>
</dbReference>
<dbReference type="HOGENOM" id="CLU_086034_5_3_6"/>
<dbReference type="InParanoid" id="P0A843"/>
<dbReference type="OMA" id="RDEDKPN"/>
<dbReference type="PhylomeDB" id="P0A843"/>
<dbReference type="BioCyc" id="EcoCyc:EG11305-MONOMER"/>
<dbReference type="BioCyc" id="MetaCyc:EG11305-MONOMER"/>
<dbReference type="PRO" id="PR:P0A843"/>
<dbReference type="Proteomes" id="UP000000625">
    <property type="component" value="Chromosome"/>
</dbReference>
<dbReference type="GO" id="GO:0005886">
    <property type="term" value="C:plasma membrane"/>
    <property type="evidence" value="ECO:0000314"/>
    <property type="project" value="EcoCyc"/>
</dbReference>
<dbReference type="GO" id="GO:0033281">
    <property type="term" value="C:TAT protein transport complex"/>
    <property type="evidence" value="ECO:0000315"/>
    <property type="project" value="EcoCyc"/>
</dbReference>
<dbReference type="GO" id="GO:0008320">
    <property type="term" value="F:protein transmembrane transporter activity"/>
    <property type="evidence" value="ECO:0000316"/>
    <property type="project" value="EcoliWiki"/>
</dbReference>
<dbReference type="GO" id="GO:0065002">
    <property type="term" value="P:intracellular protein transmembrane transport"/>
    <property type="evidence" value="ECO:0000269"/>
    <property type="project" value="EcoCyc"/>
</dbReference>
<dbReference type="GO" id="GO:0043953">
    <property type="term" value="P:protein transport by the Tat complex"/>
    <property type="evidence" value="ECO:0000269"/>
    <property type="project" value="EcoCyc"/>
</dbReference>
<dbReference type="FunFam" id="1.20.5.3310:FF:000001">
    <property type="entry name" value="Probable Sec-independent protein translocase protein TatE"/>
    <property type="match status" value="1"/>
</dbReference>
<dbReference type="Gene3D" id="1.20.5.3310">
    <property type="match status" value="1"/>
</dbReference>
<dbReference type="HAMAP" id="MF_00236">
    <property type="entry name" value="TatA_E"/>
    <property type="match status" value="1"/>
</dbReference>
<dbReference type="HAMAP" id="MF_00903">
    <property type="entry name" value="TatE"/>
    <property type="match status" value="1"/>
</dbReference>
<dbReference type="InterPro" id="IPR003369">
    <property type="entry name" value="TatA/B/E"/>
</dbReference>
<dbReference type="InterPro" id="IPR006312">
    <property type="entry name" value="TatA/E"/>
</dbReference>
<dbReference type="InterPro" id="IPR024905">
    <property type="entry name" value="TatE"/>
</dbReference>
<dbReference type="NCBIfam" id="NF002448">
    <property type="entry name" value="PRK01614.1"/>
    <property type="match status" value="1"/>
</dbReference>
<dbReference type="NCBIfam" id="NF002960">
    <property type="entry name" value="PRK03625.1"/>
    <property type="match status" value="1"/>
</dbReference>
<dbReference type="NCBIfam" id="TIGR01411">
    <property type="entry name" value="tatAE"/>
    <property type="match status" value="1"/>
</dbReference>
<dbReference type="PANTHER" id="PTHR42982">
    <property type="entry name" value="SEC-INDEPENDENT PROTEIN TRANSLOCASE PROTEIN TATA"/>
    <property type="match status" value="1"/>
</dbReference>
<dbReference type="PANTHER" id="PTHR42982:SF5">
    <property type="entry name" value="SEC-INDEPENDENT PROTEIN TRANSLOCASE PROTEIN TATE"/>
    <property type="match status" value="1"/>
</dbReference>
<dbReference type="Pfam" id="PF02416">
    <property type="entry name" value="TatA_B_E"/>
    <property type="match status" value="1"/>
</dbReference>
<comment type="function">
    <text evidence="1 3">Part of the twin-arginine translocation (Tat) system that transports large folded proteins containing a characteristic twin-arginine motif in their signal peptide across membranes. TatE shares overlapping functions with TatA.</text>
</comment>
<comment type="subcellular location">
    <subcellularLocation>
        <location evidence="1">Cell inner membrane</location>
        <topology evidence="1">Single-pass membrane protein</topology>
    </subcellularLocation>
</comment>
<comment type="induction">
    <text evidence="2">Constitutively expressed.</text>
</comment>
<comment type="disruption phenotype">
    <text evidence="3">Disruption of tatE affects the correct localization of multiple enzymes whose precursors bear twin arginine transfer peptides. Export is completely blocked when both tatA and tatE are inactivated.</text>
</comment>
<comment type="similarity">
    <text evidence="1">Belongs to the TatA/E family. TatE subfamily.</text>
</comment>
<sequence>MGEISITKLLVVAALVVLLFGTKKLRTLGGDLGAAIKGFKKAMNDDDAAAKKGADVDLQAEKLSHKE</sequence>
<evidence type="ECO:0000255" key="1">
    <source>
        <dbReference type="HAMAP-Rule" id="MF_00903"/>
    </source>
</evidence>
<evidence type="ECO:0000269" key="2">
    <source>
    </source>
</evidence>
<evidence type="ECO:0000269" key="3">
    <source>
    </source>
</evidence>
<evidence type="ECO:0000305" key="4"/>
<protein>
    <recommendedName>
        <fullName>Sec-independent protein translocase protein TatE</fullName>
    </recommendedName>
</protein>
<keyword id="KW-0997">Cell inner membrane</keyword>
<keyword id="KW-1003">Cell membrane</keyword>
<keyword id="KW-0472">Membrane</keyword>
<keyword id="KW-0653">Protein transport</keyword>
<keyword id="KW-1185">Reference proteome</keyword>
<keyword id="KW-0811">Translocation</keyword>
<keyword id="KW-0812">Transmembrane</keyword>
<keyword id="KW-1133">Transmembrane helix</keyword>
<keyword id="KW-0813">Transport</keyword>
<proteinExistence type="evidence at transcript level"/>
<name>TATE_ECOLI</name>